<dbReference type="EMBL" id="AE000511">
    <property type="protein sequence ID" value="AAD08335.1"/>
    <property type="molecule type" value="Genomic_DNA"/>
</dbReference>
<dbReference type="PIR" id="D64681">
    <property type="entry name" value="D64681"/>
</dbReference>
<dbReference type="RefSeq" id="NP_208084.1">
    <property type="nucleotide sequence ID" value="NC_000915.1"/>
</dbReference>
<dbReference type="RefSeq" id="WP_001216119.1">
    <property type="nucleotide sequence ID" value="NC_018939.1"/>
</dbReference>
<dbReference type="SMR" id="P56042"/>
<dbReference type="FunCoup" id="P56042">
    <property type="interactions" value="427"/>
</dbReference>
<dbReference type="IntAct" id="P56042">
    <property type="interactions" value="2"/>
</dbReference>
<dbReference type="STRING" id="85962.HP_1292"/>
<dbReference type="PaxDb" id="85962-C694_06675"/>
<dbReference type="EnsemblBacteria" id="AAD08335">
    <property type="protein sequence ID" value="AAD08335"/>
    <property type="gene ID" value="HP_1292"/>
</dbReference>
<dbReference type="GeneID" id="93237577"/>
<dbReference type="KEGG" id="heo:C694_06675"/>
<dbReference type="KEGG" id="hpy:HP_1292"/>
<dbReference type="PATRIC" id="fig|85962.47.peg.1386"/>
<dbReference type="eggNOG" id="COG0203">
    <property type="taxonomic scope" value="Bacteria"/>
</dbReference>
<dbReference type="InParanoid" id="P56042"/>
<dbReference type="OrthoDB" id="9809073at2"/>
<dbReference type="PhylomeDB" id="P56042"/>
<dbReference type="Proteomes" id="UP000000429">
    <property type="component" value="Chromosome"/>
</dbReference>
<dbReference type="GO" id="GO:0022625">
    <property type="term" value="C:cytosolic large ribosomal subunit"/>
    <property type="evidence" value="ECO:0000318"/>
    <property type="project" value="GO_Central"/>
</dbReference>
<dbReference type="GO" id="GO:0003735">
    <property type="term" value="F:structural constituent of ribosome"/>
    <property type="evidence" value="ECO:0000318"/>
    <property type="project" value="GO_Central"/>
</dbReference>
<dbReference type="GO" id="GO:0006412">
    <property type="term" value="P:translation"/>
    <property type="evidence" value="ECO:0007669"/>
    <property type="project" value="UniProtKB-UniRule"/>
</dbReference>
<dbReference type="FunFam" id="3.90.1030.10:FF:000003">
    <property type="entry name" value="50S ribosomal protein L17"/>
    <property type="match status" value="1"/>
</dbReference>
<dbReference type="Gene3D" id="3.90.1030.10">
    <property type="entry name" value="Ribosomal protein L17"/>
    <property type="match status" value="1"/>
</dbReference>
<dbReference type="HAMAP" id="MF_01368">
    <property type="entry name" value="Ribosomal_bL17"/>
    <property type="match status" value="1"/>
</dbReference>
<dbReference type="InterPro" id="IPR000456">
    <property type="entry name" value="Ribosomal_bL17"/>
</dbReference>
<dbReference type="InterPro" id="IPR047859">
    <property type="entry name" value="Ribosomal_bL17_CS"/>
</dbReference>
<dbReference type="InterPro" id="IPR036373">
    <property type="entry name" value="Ribosomal_bL17_sf"/>
</dbReference>
<dbReference type="NCBIfam" id="TIGR00059">
    <property type="entry name" value="L17"/>
    <property type="match status" value="1"/>
</dbReference>
<dbReference type="PANTHER" id="PTHR14413:SF16">
    <property type="entry name" value="LARGE RIBOSOMAL SUBUNIT PROTEIN BL17M"/>
    <property type="match status" value="1"/>
</dbReference>
<dbReference type="PANTHER" id="PTHR14413">
    <property type="entry name" value="RIBOSOMAL PROTEIN L17"/>
    <property type="match status" value="1"/>
</dbReference>
<dbReference type="Pfam" id="PF01196">
    <property type="entry name" value="Ribosomal_L17"/>
    <property type="match status" value="1"/>
</dbReference>
<dbReference type="SUPFAM" id="SSF64263">
    <property type="entry name" value="Prokaryotic ribosomal protein L17"/>
    <property type="match status" value="1"/>
</dbReference>
<dbReference type="PROSITE" id="PS01167">
    <property type="entry name" value="RIBOSOMAL_L17"/>
    <property type="match status" value="1"/>
</dbReference>
<evidence type="ECO:0000255" key="1">
    <source>
        <dbReference type="HAMAP-Rule" id="MF_01368"/>
    </source>
</evidence>
<evidence type="ECO:0000305" key="2"/>
<accession>P56042</accession>
<feature type="chain" id="PRO_0000175528" description="Large ribosomal subunit protein bL17">
    <location>
        <begin position="1"/>
        <end position="116"/>
    </location>
</feature>
<organism>
    <name type="scientific">Helicobacter pylori (strain ATCC 700392 / 26695)</name>
    <name type="common">Campylobacter pylori</name>
    <dbReference type="NCBI Taxonomy" id="85962"/>
    <lineage>
        <taxon>Bacteria</taxon>
        <taxon>Pseudomonadati</taxon>
        <taxon>Campylobacterota</taxon>
        <taxon>Epsilonproteobacteria</taxon>
        <taxon>Campylobacterales</taxon>
        <taxon>Helicobacteraceae</taxon>
        <taxon>Helicobacter</taxon>
    </lineage>
</organism>
<name>RL17_HELPY</name>
<proteinExistence type="inferred from homology"/>
<gene>
    <name evidence="1" type="primary">rplQ</name>
    <name type="ordered locus">HP_1292</name>
</gene>
<sequence>MRHKHGYRKLGRTSSHRKALLKNLAIALIEHNKIETGIYKAKELRSYIEKLTTAARVGDFNAHRHVFAYLQNKEATHKLVTEIAPKYAQRNGGYTRIQRTTFRRGDASTLATIEFV</sequence>
<reference key="1">
    <citation type="journal article" date="1997" name="Nature">
        <title>The complete genome sequence of the gastric pathogen Helicobacter pylori.</title>
        <authorList>
            <person name="Tomb J.-F."/>
            <person name="White O."/>
            <person name="Kerlavage A.R."/>
            <person name="Clayton R.A."/>
            <person name="Sutton G.G."/>
            <person name="Fleischmann R.D."/>
            <person name="Ketchum K.A."/>
            <person name="Klenk H.-P."/>
            <person name="Gill S.R."/>
            <person name="Dougherty B.A."/>
            <person name="Nelson K.E."/>
            <person name="Quackenbush J."/>
            <person name="Zhou L."/>
            <person name="Kirkness E.F."/>
            <person name="Peterson S.N."/>
            <person name="Loftus B.J."/>
            <person name="Richardson D.L."/>
            <person name="Dodson R.J."/>
            <person name="Khalak H.G."/>
            <person name="Glodek A."/>
            <person name="McKenney K."/>
            <person name="FitzGerald L.M."/>
            <person name="Lee N."/>
            <person name="Adams M.D."/>
            <person name="Hickey E.K."/>
            <person name="Berg D.E."/>
            <person name="Gocayne J.D."/>
            <person name="Utterback T.R."/>
            <person name="Peterson J.D."/>
            <person name="Kelley J.M."/>
            <person name="Cotton M.D."/>
            <person name="Weidman J.F."/>
            <person name="Fujii C."/>
            <person name="Bowman C."/>
            <person name="Watthey L."/>
            <person name="Wallin E."/>
            <person name="Hayes W.S."/>
            <person name="Borodovsky M."/>
            <person name="Karp P.D."/>
            <person name="Smith H.O."/>
            <person name="Fraser C.M."/>
            <person name="Venter J.C."/>
        </authorList>
    </citation>
    <scope>NUCLEOTIDE SEQUENCE [LARGE SCALE GENOMIC DNA]</scope>
    <source>
        <strain>ATCC 700392 / 26695</strain>
    </source>
</reference>
<protein>
    <recommendedName>
        <fullName evidence="1">Large ribosomal subunit protein bL17</fullName>
    </recommendedName>
    <alternativeName>
        <fullName evidence="2">50S ribosomal protein L17</fullName>
    </alternativeName>
</protein>
<comment type="subunit">
    <text evidence="1">Part of the 50S ribosomal subunit. Contacts protein L32.</text>
</comment>
<comment type="similarity">
    <text evidence="1">Belongs to the bacterial ribosomal protein bL17 family.</text>
</comment>
<keyword id="KW-1185">Reference proteome</keyword>
<keyword id="KW-0687">Ribonucleoprotein</keyword>
<keyword id="KW-0689">Ribosomal protein</keyword>